<protein>
    <recommendedName>
        <fullName>Cytochrome b</fullName>
    </recommendedName>
    <alternativeName>
        <fullName>Complex III subunit 3</fullName>
    </alternativeName>
    <alternativeName>
        <fullName>Complex III subunit III</fullName>
    </alternativeName>
    <alternativeName>
        <fullName>Cytochrome b-c1 complex subunit 3</fullName>
    </alternativeName>
    <alternativeName>
        <fullName>Ubiquinol-cytochrome-c reductase complex cytochrome b subunit</fullName>
    </alternativeName>
</protein>
<gene>
    <name type="primary">MT-CYB</name>
    <name type="synonym">COB</name>
    <name type="synonym">CYTB</name>
    <name type="synonym">MTCYB</name>
</gene>
<geneLocation type="mitochondrion"/>
<sequence>MINLRKTHPLMKIINHSFIDLPTPSNISAWWNFGSLLGMCLMIQILTGLFLAMHYTSDTMTAFSSVAHICRDVNYGWLLRNLHANGASMFFMCLFLHVGRGIYYGSYLYKETWNIGVILLLAVMATAFVGYLLPWGQMSFWGATVITNLLSAIPYIGQTLVEWVWGGFAVDKATLTRFFAFHFILPFIITALATVHLLFLHETGSNNPLGINPDSDKIPFHPYYTIKDALGLMLLLLMLLLLALFSPDLLGDPDNFSPANPLNTPPHIKPEWYFLFAYAILRSIPNKLGGVLALLASILILLIIPLLHTANQRSMMFRPMSQTLFWILTANLITLTWIGGQPVEQPFIIIGQLASMLYFLLILVLMPLAGMFENYMLKPKW</sequence>
<organism>
    <name type="scientific">Pseudantechinus ningbing</name>
    <name type="common">Ningbing false antechinus</name>
    <dbReference type="NCBI Taxonomy" id="32558"/>
    <lineage>
        <taxon>Eukaryota</taxon>
        <taxon>Metazoa</taxon>
        <taxon>Chordata</taxon>
        <taxon>Craniata</taxon>
        <taxon>Vertebrata</taxon>
        <taxon>Euteleostomi</taxon>
        <taxon>Mammalia</taxon>
        <taxon>Metatheria</taxon>
        <taxon>Dasyuromorphia</taxon>
        <taxon>Dasyuridae</taxon>
        <taxon>Pseudantechinus</taxon>
    </lineage>
</organism>
<feature type="chain" id="PRO_0000061453" description="Cytochrome b">
    <location>
        <begin position="1"/>
        <end position="381"/>
    </location>
</feature>
<feature type="transmembrane region" description="Helical" evidence="2">
    <location>
        <begin position="33"/>
        <end position="53"/>
    </location>
</feature>
<feature type="transmembrane region" description="Helical" evidence="2">
    <location>
        <begin position="77"/>
        <end position="98"/>
    </location>
</feature>
<feature type="transmembrane region" description="Helical" evidence="2">
    <location>
        <begin position="113"/>
        <end position="133"/>
    </location>
</feature>
<feature type="transmembrane region" description="Helical" evidence="2">
    <location>
        <begin position="178"/>
        <end position="198"/>
    </location>
</feature>
<feature type="transmembrane region" description="Helical" evidence="2">
    <location>
        <begin position="226"/>
        <end position="246"/>
    </location>
</feature>
<feature type="transmembrane region" description="Helical" evidence="2">
    <location>
        <begin position="288"/>
        <end position="308"/>
    </location>
</feature>
<feature type="transmembrane region" description="Helical" evidence="2">
    <location>
        <begin position="320"/>
        <end position="340"/>
    </location>
</feature>
<feature type="transmembrane region" description="Helical" evidence="2">
    <location>
        <begin position="347"/>
        <end position="367"/>
    </location>
</feature>
<feature type="binding site" description="axial binding residue" evidence="2">
    <location>
        <position position="83"/>
    </location>
    <ligand>
        <name>heme b</name>
        <dbReference type="ChEBI" id="CHEBI:60344"/>
        <label>b562</label>
    </ligand>
    <ligandPart>
        <name>Fe</name>
        <dbReference type="ChEBI" id="CHEBI:18248"/>
    </ligandPart>
</feature>
<feature type="binding site" description="axial binding residue" evidence="2">
    <location>
        <position position="97"/>
    </location>
    <ligand>
        <name>heme b</name>
        <dbReference type="ChEBI" id="CHEBI:60344"/>
        <label>b566</label>
    </ligand>
    <ligandPart>
        <name>Fe</name>
        <dbReference type="ChEBI" id="CHEBI:18248"/>
    </ligandPart>
</feature>
<feature type="binding site" description="axial binding residue" evidence="2">
    <location>
        <position position="182"/>
    </location>
    <ligand>
        <name>heme b</name>
        <dbReference type="ChEBI" id="CHEBI:60344"/>
        <label>b562</label>
    </ligand>
    <ligandPart>
        <name>Fe</name>
        <dbReference type="ChEBI" id="CHEBI:18248"/>
    </ligandPart>
</feature>
<feature type="binding site" description="axial binding residue" evidence="2">
    <location>
        <position position="196"/>
    </location>
    <ligand>
        <name>heme b</name>
        <dbReference type="ChEBI" id="CHEBI:60344"/>
        <label>b566</label>
    </ligand>
    <ligandPart>
        <name>Fe</name>
        <dbReference type="ChEBI" id="CHEBI:18248"/>
    </ligandPart>
</feature>
<feature type="binding site" evidence="2">
    <location>
        <position position="201"/>
    </location>
    <ligand>
        <name>a ubiquinone</name>
        <dbReference type="ChEBI" id="CHEBI:16389"/>
    </ligand>
</feature>
<comment type="function">
    <text evidence="2">Component of the ubiquinol-cytochrome c reductase complex (complex III or cytochrome b-c1 complex) that is part of the mitochondrial respiratory chain. The b-c1 complex mediates electron transfer from ubiquinol to cytochrome c. Contributes to the generation of a proton gradient across the mitochondrial membrane that is then used for ATP synthesis.</text>
</comment>
<comment type="cofactor">
    <cofactor evidence="2">
        <name>heme b</name>
        <dbReference type="ChEBI" id="CHEBI:60344"/>
    </cofactor>
    <text evidence="2">Binds 2 heme b groups non-covalently.</text>
</comment>
<comment type="subunit">
    <text evidence="2">The cytochrome bc1 complex contains 11 subunits: 3 respiratory subunits (MT-CYB, CYC1 and UQCRFS1), 2 core proteins (UQCRC1 and UQCRC2) and 6 low-molecular weight proteins (UQCRH/QCR6, UQCRB/QCR7, UQCRQ/QCR8, UQCR10/QCR9, UQCR11/QCR10 and a cleavage product of UQCRFS1). This cytochrome bc1 complex then forms a dimer.</text>
</comment>
<comment type="subcellular location">
    <subcellularLocation>
        <location evidence="2">Mitochondrion inner membrane</location>
        <topology evidence="2">Multi-pass membrane protein</topology>
    </subcellularLocation>
</comment>
<comment type="miscellaneous">
    <text evidence="1">Heme 1 (or BL or b562) is low-potential and absorbs at about 562 nm, and heme 2 (or BH or b566) is high-potential and absorbs at about 566 nm.</text>
</comment>
<comment type="similarity">
    <text evidence="3 4">Belongs to the cytochrome b family.</text>
</comment>
<comment type="caution">
    <text evidence="2">The full-length protein contains only eight transmembrane helices, not nine as predicted by bioinformatics tools.</text>
</comment>
<dbReference type="EMBL" id="U07592">
    <property type="protein sequence ID" value="AAB88768.1"/>
    <property type="molecule type" value="Genomic_DNA"/>
</dbReference>
<dbReference type="SMR" id="Q35553"/>
<dbReference type="GO" id="GO:0005743">
    <property type="term" value="C:mitochondrial inner membrane"/>
    <property type="evidence" value="ECO:0007669"/>
    <property type="project" value="UniProtKB-SubCell"/>
</dbReference>
<dbReference type="GO" id="GO:0045275">
    <property type="term" value="C:respiratory chain complex III"/>
    <property type="evidence" value="ECO:0007669"/>
    <property type="project" value="InterPro"/>
</dbReference>
<dbReference type="GO" id="GO:0046872">
    <property type="term" value="F:metal ion binding"/>
    <property type="evidence" value="ECO:0007669"/>
    <property type="project" value="UniProtKB-KW"/>
</dbReference>
<dbReference type="GO" id="GO:0008121">
    <property type="term" value="F:ubiquinol-cytochrome-c reductase activity"/>
    <property type="evidence" value="ECO:0007669"/>
    <property type="project" value="InterPro"/>
</dbReference>
<dbReference type="GO" id="GO:0006122">
    <property type="term" value="P:mitochondrial electron transport, ubiquinol to cytochrome c"/>
    <property type="evidence" value="ECO:0007669"/>
    <property type="project" value="TreeGrafter"/>
</dbReference>
<dbReference type="CDD" id="cd00290">
    <property type="entry name" value="cytochrome_b_C"/>
    <property type="match status" value="1"/>
</dbReference>
<dbReference type="CDD" id="cd00284">
    <property type="entry name" value="Cytochrome_b_N"/>
    <property type="match status" value="1"/>
</dbReference>
<dbReference type="FunFam" id="1.20.810.10:FF:000002">
    <property type="entry name" value="Cytochrome b"/>
    <property type="match status" value="1"/>
</dbReference>
<dbReference type="Gene3D" id="1.20.810.10">
    <property type="entry name" value="Cytochrome Bc1 Complex, Chain C"/>
    <property type="match status" value="1"/>
</dbReference>
<dbReference type="InterPro" id="IPR005798">
    <property type="entry name" value="Cyt_b/b6_C"/>
</dbReference>
<dbReference type="InterPro" id="IPR036150">
    <property type="entry name" value="Cyt_b/b6_C_sf"/>
</dbReference>
<dbReference type="InterPro" id="IPR005797">
    <property type="entry name" value="Cyt_b/b6_N"/>
</dbReference>
<dbReference type="InterPro" id="IPR027387">
    <property type="entry name" value="Cytb/b6-like_sf"/>
</dbReference>
<dbReference type="InterPro" id="IPR030689">
    <property type="entry name" value="Cytochrome_b"/>
</dbReference>
<dbReference type="InterPro" id="IPR048260">
    <property type="entry name" value="Cytochrome_b_C_euk/bac"/>
</dbReference>
<dbReference type="InterPro" id="IPR048259">
    <property type="entry name" value="Cytochrome_b_N_euk/bac"/>
</dbReference>
<dbReference type="InterPro" id="IPR016174">
    <property type="entry name" value="Di-haem_cyt_TM"/>
</dbReference>
<dbReference type="PANTHER" id="PTHR19271">
    <property type="entry name" value="CYTOCHROME B"/>
    <property type="match status" value="1"/>
</dbReference>
<dbReference type="PANTHER" id="PTHR19271:SF16">
    <property type="entry name" value="CYTOCHROME B"/>
    <property type="match status" value="1"/>
</dbReference>
<dbReference type="Pfam" id="PF00032">
    <property type="entry name" value="Cytochrom_B_C"/>
    <property type="match status" value="1"/>
</dbReference>
<dbReference type="Pfam" id="PF00033">
    <property type="entry name" value="Cytochrome_B"/>
    <property type="match status" value="1"/>
</dbReference>
<dbReference type="PIRSF" id="PIRSF038885">
    <property type="entry name" value="COB"/>
    <property type="match status" value="1"/>
</dbReference>
<dbReference type="SUPFAM" id="SSF81648">
    <property type="entry name" value="a domain/subunit of cytochrome bc1 complex (Ubiquinol-cytochrome c reductase)"/>
    <property type="match status" value="1"/>
</dbReference>
<dbReference type="SUPFAM" id="SSF81342">
    <property type="entry name" value="Transmembrane di-heme cytochromes"/>
    <property type="match status" value="1"/>
</dbReference>
<dbReference type="PROSITE" id="PS51003">
    <property type="entry name" value="CYTB_CTER"/>
    <property type="match status" value="1"/>
</dbReference>
<dbReference type="PROSITE" id="PS51002">
    <property type="entry name" value="CYTB_NTER"/>
    <property type="match status" value="1"/>
</dbReference>
<reference key="1">
    <citation type="journal article" date="1994" name="J. Mammal. Evol.">
        <title>Phylogenetic structure of the marsupial family Dasyuridae based on cytochrome-b DNA sequences.</title>
        <authorList>
            <person name="Krajewski C."/>
            <person name="Painter J."/>
            <person name="Buckley L."/>
            <person name="Westerman M."/>
        </authorList>
    </citation>
    <scope>NUCLEOTIDE SEQUENCE [GENOMIC DNA]</scope>
</reference>
<proteinExistence type="inferred from homology"/>
<evidence type="ECO:0000250" key="1"/>
<evidence type="ECO:0000250" key="2">
    <source>
        <dbReference type="UniProtKB" id="P00157"/>
    </source>
</evidence>
<evidence type="ECO:0000255" key="3">
    <source>
        <dbReference type="PROSITE-ProRule" id="PRU00967"/>
    </source>
</evidence>
<evidence type="ECO:0000255" key="4">
    <source>
        <dbReference type="PROSITE-ProRule" id="PRU00968"/>
    </source>
</evidence>
<name>CYB_PSENI</name>
<accession>Q35553</accession>
<keyword id="KW-0249">Electron transport</keyword>
<keyword id="KW-0349">Heme</keyword>
<keyword id="KW-0408">Iron</keyword>
<keyword id="KW-0472">Membrane</keyword>
<keyword id="KW-0479">Metal-binding</keyword>
<keyword id="KW-0496">Mitochondrion</keyword>
<keyword id="KW-0999">Mitochondrion inner membrane</keyword>
<keyword id="KW-0679">Respiratory chain</keyword>
<keyword id="KW-0812">Transmembrane</keyword>
<keyword id="KW-1133">Transmembrane helix</keyword>
<keyword id="KW-0813">Transport</keyword>
<keyword id="KW-0830">Ubiquinone</keyword>